<organism>
    <name type="scientific">Dictyostelium discoideum</name>
    <name type="common">Social amoeba</name>
    <dbReference type="NCBI Taxonomy" id="44689"/>
    <lineage>
        <taxon>Eukaryota</taxon>
        <taxon>Amoebozoa</taxon>
        <taxon>Evosea</taxon>
        <taxon>Eumycetozoa</taxon>
        <taxon>Dictyostelia</taxon>
        <taxon>Dictyosteliales</taxon>
        <taxon>Dictyosteliaceae</taxon>
        <taxon>Dictyostelium</taxon>
    </lineage>
</organism>
<comment type="function">
    <text>Galactose- and N-acetylgalactosamine-binding lectin. May play a role in cell-substratum adhesion rather than in cell-cell adhesion. May be necessary for the maintenance of normal elongate morphology during aggregation.</text>
</comment>
<comment type="subunit">
    <text>Tetramer of four different chains (A to D).</text>
</comment>
<comment type="subcellular location">
    <subcellularLocation>
        <location>Cytoplasm</location>
    </subcellularLocation>
</comment>
<comment type="tissue specificity">
    <text>Stalk cells.</text>
</comment>
<comment type="caution">
    <text evidence="3">The gene for this protein is duplicated in strains AX3 and AX4. These strains contain a duplication of a segment of 750 kb of chromosome 2 compared to the corresponding sequence in strain AX2.</text>
</comment>
<sequence length="253" mass="28259">MSTQGLVQLLANAQCHLRTSTNYNGVHTQFNSALNYKNNGTNTIDGSEAWCSSIVDTNQYIVAGCEVPRTFMCVALQGRGDADQWVTSYKIRYSLDNVSWFEYRNGAAVTGVTDRNTVVNHFFDTPIRARSIAIHPLTWNGHISLRCEFYTQPVQSSVTQVGADIYTGDNCALNTGSGKREVVVPVKFQFEFATLPKVALNFDQIDCTDATNQTRIGVQPRNITTKGFDCVFYTWNENKVYSLRADYIATALE</sequence>
<accession>P02886</accession>
<accession>Q556P5</accession>
<accession>Q86AL3</accession>
<gene>
    <name type="primary">dscA-1</name>
    <name type="ORF">DDB_G0273063</name>
</gene>
<gene>
    <name type="primary">dscA-2</name>
    <name type="ORF">DDB_G0273919</name>
</gene>
<protein>
    <recommendedName>
        <fullName>Discoidin-1 subunit A</fullName>
    </recommendedName>
    <alternativeName>
        <fullName>Discoidin-1 subunit alpha</fullName>
        <shortName>Discoidin I chain A</shortName>
    </alternativeName>
</protein>
<dbReference type="EMBL" id="J01282">
    <property type="protein sequence ID" value="AAA33197.1"/>
    <property type="molecule type" value="Genomic_DNA"/>
</dbReference>
<dbReference type="EMBL" id="AAFI02000011">
    <property type="protein sequence ID" value="EAL70650.1"/>
    <property type="molecule type" value="Genomic_DNA"/>
</dbReference>
<dbReference type="EMBL" id="AAFI02000009">
    <property type="protein sequence ID" value="EAL70749.1"/>
    <property type="molecule type" value="Genomic_DNA"/>
</dbReference>
<dbReference type="RefSeq" id="XP_644576.1">
    <property type="nucleotide sequence ID" value="XM_639484.1"/>
</dbReference>
<dbReference type="RefSeq" id="XP_644675.1">
    <property type="nucleotide sequence ID" value="XM_639583.1"/>
</dbReference>
<dbReference type="PDB" id="2W94">
    <property type="method" value="X-ray"/>
    <property type="resolution" value="1.80 A"/>
    <property type="chains" value="A/B/C=1-253"/>
</dbReference>
<dbReference type="PDB" id="2W95">
    <property type="method" value="X-ray"/>
    <property type="resolution" value="1.75 A"/>
    <property type="chains" value="A/B/C=1-253"/>
</dbReference>
<dbReference type="PDB" id="2WN2">
    <property type="method" value="X-ray"/>
    <property type="resolution" value="1.82 A"/>
    <property type="chains" value="A/B/C=1-253"/>
</dbReference>
<dbReference type="PDB" id="2WN3">
    <property type="method" value="X-ray"/>
    <property type="resolution" value="1.59 A"/>
    <property type="chains" value="A/B/C=1-253"/>
</dbReference>
<dbReference type="PDBsum" id="2W94"/>
<dbReference type="PDBsum" id="2W95"/>
<dbReference type="PDBsum" id="2WN2"/>
<dbReference type="PDBsum" id="2WN3"/>
<dbReference type="SMR" id="P02886"/>
<dbReference type="FunCoup" id="P02886">
    <property type="interactions" value="6"/>
</dbReference>
<dbReference type="STRING" id="44689.P02886"/>
<dbReference type="UniLectin" id="P02886"/>
<dbReference type="PaxDb" id="44689-DDB0215400"/>
<dbReference type="ABCD" id="P02886">
    <property type="antibodies" value="1 sequenced antibody"/>
</dbReference>
<dbReference type="EnsemblProtists" id="EAL70650">
    <property type="protein sequence ID" value="EAL70650"/>
    <property type="gene ID" value="DDB_G0273919"/>
</dbReference>
<dbReference type="EnsemblProtists" id="EAL70749">
    <property type="protein sequence ID" value="EAL70749"/>
    <property type="gene ID" value="DDB_G0273063"/>
</dbReference>
<dbReference type="GeneID" id="8618769"/>
<dbReference type="GeneID" id="8619207"/>
<dbReference type="KEGG" id="ddi:DDB_G0273063"/>
<dbReference type="KEGG" id="ddi:DDB_G0273919"/>
<dbReference type="dictyBase" id="DDB_G0273063">
    <property type="gene designation" value="dscA-1"/>
</dbReference>
<dbReference type="dictyBase" id="DDB_G0273919">
    <property type="gene designation" value="dscA-2"/>
</dbReference>
<dbReference type="VEuPathDB" id="AmoebaDB:DDB_G0273919"/>
<dbReference type="eggNOG" id="KOG3516">
    <property type="taxonomic scope" value="Eukaryota"/>
</dbReference>
<dbReference type="HOGENOM" id="CLU_1100181_0_0_1"/>
<dbReference type="InParanoid" id="P02886"/>
<dbReference type="OMA" id="NHTQANA"/>
<dbReference type="PhylomeDB" id="P02886"/>
<dbReference type="EvolutionaryTrace" id="P02886"/>
<dbReference type="PRO" id="PR:P02886"/>
<dbReference type="Proteomes" id="UP000002195">
    <property type="component" value="Chromosome 2"/>
</dbReference>
<dbReference type="GO" id="GO:0005938">
    <property type="term" value="C:cell cortex"/>
    <property type="evidence" value="ECO:0000314"/>
    <property type="project" value="dictyBase"/>
</dbReference>
<dbReference type="GO" id="GO:0009986">
    <property type="term" value="C:cell surface"/>
    <property type="evidence" value="ECO:0000314"/>
    <property type="project" value="dictyBase"/>
</dbReference>
<dbReference type="GO" id="GO:0005737">
    <property type="term" value="C:cytoplasm"/>
    <property type="evidence" value="ECO:0000314"/>
    <property type="project" value="dictyBase"/>
</dbReference>
<dbReference type="GO" id="GO:0005829">
    <property type="term" value="C:cytosol"/>
    <property type="evidence" value="ECO:0000314"/>
    <property type="project" value="dictyBase"/>
</dbReference>
<dbReference type="GO" id="GO:0031012">
    <property type="term" value="C:extracellular matrix"/>
    <property type="evidence" value="ECO:0000314"/>
    <property type="project" value="dictyBase"/>
</dbReference>
<dbReference type="GO" id="GO:0097708">
    <property type="term" value="C:intracellular vesicle"/>
    <property type="evidence" value="ECO:0000314"/>
    <property type="project" value="dictyBase"/>
</dbReference>
<dbReference type="GO" id="GO:0045335">
    <property type="term" value="C:phagocytic vesicle"/>
    <property type="evidence" value="ECO:0007005"/>
    <property type="project" value="dictyBase"/>
</dbReference>
<dbReference type="GO" id="GO:0098636">
    <property type="term" value="C:protein complex involved in cell adhesion"/>
    <property type="evidence" value="ECO:0000314"/>
    <property type="project" value="dictyBase"/>
</dbReference>
<dbReference type="GO" id="GO:0106139">
    <property type="term" value="C:symbiont cell surface"/>
    <property type="evidence" value="ECO:0000314"/>
    <property type="project" value="dictyBase"/>
</dbReference>
<dbReference type="GO" id="GO:0030246">
    <property type="term" value="F:carbohydrate binding"/>
    <property type="evidence" value="ECO:0000314"/>
    <property type="project" value="dictyBase"/>
</dbReference>
<dbReference type="GO" id="GO:1990458">
    <property type="term" value="F:lipooligosaccharide binding"/>
    <property type="evidence" value="ECO:0000314"/>
    <property type="project" value="dictyBase"/>
</dbReference>
<dbReference type="GO" id="GO:0046871">
    <property type="term" value="F:N-acetylgalactosamine binding"/>
    <property type="evidence" value="ECO:0000314"/>
    <property type="project" value="dictyBase"/>
</dbReference>
<dbReference type="GO" id="GO:0070492">
    <property type="term" value="F:oligosaccharide binding"/>
    <property type="evidence" value="ECO:0000314"/>
    <property type="project" value="dictyBase"/>
</dbReference>
<dbReference type="GO" id="GO:0030247">
    <property type="term" value="F:polysaccharide binding"/>
    <property type="evidence" value="ECO:0000314"/>
    <property type="project" value="dictyBase"/>
</dbReference>
<dbReference type="GO" id="GO:0019954">
    <property type="term" value="P:asexual reproduction"/>
    <property type="evidence" value="ECO:0000315"/>
    <property type="project" value="dictyBase"/>
</dbReference>
<dbReference type="GO" id="GO:0007155">
    <property type="term" value="P:cell adhesion"/>
    <property type="evidence" value="ECO:0000314"/>
    <property type="project" value="dictyBase"/>
</dbReference>
<dbReference type="GO" id="GO:0098609">
    <property type="term" value="P:cell-cell adhesion"/>
    <property type="evidence" value="ECO:0000314"/>
    <property type="project" value="dictyBase"/>
</dbReference>
<dbReference type="GO" id="GO:0031589">
    <property type="term" value="P:cell-substrate adhesion"/>
    <property type="evidence" value="ECO:0000314"/>
    <property type="project" value="dictyBase"/>
</dbReference>
<dbReference type="GO" id="GO:0030865">
    <property type="term" value="P:cortical cytoskeleton organization"/>
    <property type="evidence" value="ECO:0000315"/>
    <property type="project" value="dictyBase"/>
</dbReference>
<dbReference type="GO" id="GO:0007010">
    <property type="term" value="P:cytoskeleton organization"/>
    <property type="evidence" value="ECO:0000315"/>
    <property type="project" value="dictyBase"/>
</dbReference>
<dbReference type="GO" id="GO:0106136">
    <property type="term" value="P:lectin-induced modified bacterial internalization"/>
    <property type="evidence" value="ECO:0000314"/>
    <property type="project" value="dictyBase"/>
</dbReference>
<dbReference type="GO" id="GO:0000281">
    <property type="term" value="P:mitotic cytokinesis"/>
    <property type="evidence" value="ECO:0000315"/>
    <property type="project" value="dictyBase"/>
</dbReference>
<dbReference type="GO" id="GO:0072697">
    <property type="term" value="P:protein localization to cell cortex"/>
    <property type="evidence" value="ECO:0000315"/>
    <property type="project" value="dictyBase"/>
</dbReference>
<dbReference type="GO" id="GO:0010468">
    <property type="term" value="P:regulation of gene expression"/>
    <property type="evidence" value="ECO:0000315"/>
    <property type="project" value="dictyBase"/>
</dbReference>
<dbReference type="GO" id="GO:0061635">
    <property type="term" value="P:regulation of protein complex stability"/>
    <property type="evidence" value="ECO:0000315"/>
    <property type="project" value="dictyBase"/>
</dbReference>
<dbReference type="GO" id="GO:0009617">
    <property type="term" value="P:response to bacterium"/>
    <property type="evidence" value="ECO:0007007"/>
    <property type="project" value="dictyBase"/>
</dbReference>
<dbReference type="GO" id="GO:1902168">
    <property type="term" value="P:response to catechin"/>
    <property type="evidence" value="ECO:0000314"/>
    <property type="project" value="dictyBase"/>
</dbReference>
<dbReference type="GO" id="GO:1904643">
    <property type="term" value="P:response to curcumin"/>
    <property type="evidence" value="ECO:0000314"/>
    <property type="project" value="dictyBase"/>
</dbReference>
<dbReference type="CDD" id="cd00057">
    <property type="entry name" value="FA58C"/>
    <property type="match status" value="1"/>
</dbReference>
<dbReference type="FunFam" id="2.60.120.260:FF:000016">
    <property type="entry name" value="Contactin-associated protein-like 4 isoform 1"/>
    <property type="match status" value="1"/>
</dbReference>
<dbReference type="FunFam" id="2.60.40.2080:FF:000001">
    <property type="entry name" value="Discoidin-1 subunit A"/>
    <property type="match status" value="1"/>
</dbReference>
<dbReference type="Gene3D" id="2.60.40.2080">
    <property type="match status" value="1"/>
</dbReference>
<dbReference type="Gene3D" id="2.60.120.260">
    <property type="entry name" value="Galactose-binding domain-like"/>
    <property type="match status" value="1"/>
</dbReference>
<dbReference type="InterPro" id="IPR000421">
    <property type="entry name" value="FA58C"/>
</dbReference>
<dbReference type="InterPro" id="IPR008979">
    <property type="entry name" value="Galactose-bd-like_sf"/>
</dbReference>
<dbReference type="InterPro" id="IPR052487">
    <property type="entry name" value="Galactose-binding_lectin"/>
</dbReference>
<dbReference type="InterPro" id="IPR037221">
    <property type="entry name" value="H-type_lectin_dom_sf"/>
</dbReference>
<dbReference type="InterPro" id="IPR019019">
    <property type="entry name" value="H-type_lectin_domain"/>
</dbReference>
<dbReference type="PANTHER" id="PTHR46938:SF1">
    <property type="entry name" value="DISCOIDIN-1 SUBUNIT A-RELATED"/>
    <property type="match status" value="1"/>
</dbReference>
<dbReference type="PANTHER" id="PTHR46938">
    <property type="entry name" value="DISCOIDIN-1 SUBUNIT A-RELATED-RELATED"/>
    <property type="match status" value="1"/>
</dbReference>
<dbReference type="Pfam" id="PF00754">
    <property type="entry name" value="F5_F8_type_C"/>
    <property type="match status" value="1"/>
</dbReference>
<dbReference type="Pfam" id="PF09458">
    <property type="entry name" value="H_lectin"/>
    <property type="match status" value="1"/>
</dbReference>
<dbReference type="SUPFAM" id="SSF141086">
    <property type="entry name" value="Agglutinin HPA-like"/>
    <property type="match status" value="1"/>
</dbReference>
<dbReference type="SUPFAM" id="SSF49785">
    <property type="entry name" value="Galactose-binding domain-like"/>
    <property type="match status" value="1"/>
</dbReference>
<dbReference type="PROSITE" id="PS01285">
    <property type="entry name" value="FA58C_1"/>
    <property type="match status" value="1"/>
</dbReference>
<dbReference type="PROSITE" id="PS50022">
    <property type="entry name" value="FA58C_3"/>
    <property type="match status" value="1"/>
</dbReference>
<evidence type="ECO:0000250" key="1"/>
<evidence type="ECO:0000255" key="2">
    <source>
        <dbReference type="PROSITE-ProRule" id="PRU00081"/>
    </source>
</evidence>
<evidence type="ECO:0000305" key="3"/>
<evidence type="ECO:0007829" key="4">
    <source>
        <dbReference type="PDB" id="2WN3"/>
    </source>
</evidence>
<name>DIS1A_DICDI</name>
<reference key="1">
    <citation type="journal article" date="1981" name="J. Mol. Biol.">
        <title>Sequence and expression of the discoidin I gene family in Dictyostelium discoideum.</title>
        <authorList>
            <person name="Poole S."/>
            <person name="Firtel R.A."/>
            <person name="Lamar E."/>
            <person name="Rowekamp W."/>
        </authorList>
    </citation>
    <scope>NUCLEOTIDE SEQUENCE [GENOMIC DNA]</scope>
</reference>
<reference key="2">
    <citation type="journal article" date="1982" name="J. Mol. Biol.">
        <title>Transcription of a dictyostelium discoidin-I gene in yeast alternative promoter sites used in two different eukaryotic cells.</title>
        <authorList>
            <person name="Jellinghaus U."/>
            <person name="Schaetzle U."/>
            <person name="Schmid W."/>
            <person name="Rowekamp W."/>
        </authorList>
    </citation>
    <scope>SEQUENCE REVISION</scope>
</reference>
<reference key="3">
    <citation type="journal article" date="2002" name="Nature">
        <title>Sequence and analysis of chromosome 2 of Dictyostelium discoideum.</title>
        <authorList>
            <person name="Gloeckner G."/>
            <person name="Eichinger L."/>
            <person name="Szafranski K."/>
            <person name="Pachebat J.A."/>
            <person name="Bankier A.T."/>
            <person name="Dear P.H."/>
            <person name="Lehmann R."/>
            <person name="Baumgart C."/>
            <person name="Parra G."/>
            <person name="Abril J.F."/>
            <person name="Guigo R."/>
            <person name="Kumpf K."/>
            <person name="Tunggal B."/>
            <person name="Cox E.C."/>
            <person name="Quail M.A."/>
            <person name="Platzer M."/>
            <person name="Rosenthal A."/>
            <person name="Noegel A.A."/>
        </authorList>
    </citation>
    <scope>NUCLEOTIDE SEQUENCE [LARGE SCALE GENOMIC DNA]</scope>
    <source>
        <strain>AX4</strain>
    </source>
</reference>
<reference key="4">
    <citation type="journal article" date="2005" name="Nature">
        <title>The genome of the social amoeba Dictyostelium discoideum.</title>
        <authorList>
            <person name="Eichinger L."/>
            <person name="Pachebat J.A."/>
            <person name="Gloeckner G."/>
            <person name="Rajandream M.A."/>
            <person name="Sucgang R."/>
            <person name="Berriman M."/>
            <person name="Song J."/>
            <person name="Olsen R."/>
            <person name="Szafranski K."/>
            <person name="Xu Q."/>
            <person name="Tunggal B."/>
            <person name="Kummerfeld S."/>
            <person name="Madera M."/>
            <person name="Konfortov B.A."/>
            <person name="Rivero F."/>
            <person name="Bankier A.T."/>
            <person name="Lehmann R."/>
            <person name="Hamlin N."/>
            <person name="Davies R."/>
            <person name="Gaudet P."/>
            <person name="Fey P."/>
            <person name="Pilcher K."/>
            <person name="Chen G."/>
            <person name="Saunders D."/>
            <person name="Sodergren E.J."/>
            <person name="Davis P."/>
            <person name="Kerhornou A."/>
            <person name="Nie X."/>
            <person name="Hall N."/>
            <person name="Anjard C."/>
            <person name="Hemphill L."/>
            <person name="Bason N."/>
            <person name="Farbrother P."/>
            <person name="Desany B."/>
            <person name="Just E."/>
            <person name="Morio T."/>
            <person name="Rost R."/>
            <person name="Churcher C.M."/>
            <person name="Cooper J."/>
            <person name="Haydock S."/>
            <person name="van Driessche N."/>
            <person name="Cronin A."/>
            <person name="Goodhead I."/>
            <person name="Muzny D.M."/>
            <person name="Mourier T."/>
            <person name="Pain A."/>
            <person name="Lu M."/>
            <person name="Harper D."/>
            <person name="Lindsay R."/>
            <person name="Hauser H."/>
            <person name="James K.D."/>
            <person name="Quiles M."/>
            <person name="Madan Babu M."/>
            <person name="Saito T."/>
            <person name="Buchrieser C."/>
            <person name="Wardroper A."/>
            <person name="Felder M."/>
            <person name="Thangavelu M."/>
            <person name="Johnson D."/>
            <person name="Knights A."/>
            <person name="Loulseged H."/>
            <person name="Mungall K.L."/>
            <person name="Oliver K."/>
            <person name="Price C."/>
            <person name="Quail M.A."/>
            <person name="Urushihara H."/>
            <person name="Hernandez J."/>
            <person name="Rabbinowitsch E."/>
            <person name="Steffen D."/>
            <person name="Sanders M."/>
            <person name="Ma J."/>
            <person name="Kohara Y."/>
            <person name="Sharp S."/>
            <person name="Simmonds M.N."/>
            <person name="Spiegler S."/>
            <person name="Tivey A."/>
            <person name="Sugano S."/>
            <person name="White B."/>
            <person name="Walker D."/>
            <person name="Woodward J.R."/>
            <person name="Winckler T."/>
            <person name="Tanaka Y."/>
            <person name="Shaulsky G."/>
            <person name="Schleicher M."/>
            <person name="Weinstock G.M."/>
            <person name="Rosenthal A."/>
            <person name="Cox E.C."/>
            <person name="Chisholm R.L."/>
            <person name="Gibbs R.A."/>
            <person name="Loomis W.F."/>
            <person name="Platzer M."/>
            <person name="Kay R.R."/>
            <person name="Williams J.G."/>
            <person name="Dear P.H."/>
            <person name="Noegel A.A."/>
            <person name="Barrell B.G."/>
            <person name="Kuspa A."/>
        </authorList>
    </citation>
    <scope>NUCLEOTIDE SEQUENCE [LARGE SCALE GENOMIC DNA]</scope>
    <source>
        <strain>AX4</strain>
    </source>
</reference>
<reference key="5">
    <citation type="journal article" date="1982" name="Cell">
        <title>Differential expression of the members of the discoidin I multigene family during growth and development of Dictyostelium discoideum.</title>
        <authorList>
            <person name="Devine J.M."/>
            <person name="Tsang A.S."/>
            <person name="Williams J.G."/>
        </authorList>
    </citation>
    <scope>NUCLEOTIDE SEQUENCE [GENOMIC DNA] OF 1-40</scope>
</reference>
<reference key="6">
    <citation type="journal article" date="1984" name="Cell">
        <title>Discoidin I is implicated in cell-substratum attachment and ordered cell migration of Dictyostelium discoideum and resembles fibronectin.</title>
        <authorList>
            <person name="Springer W.R."/>
            <person name="Cooper D.N.W."/>
            <person name="Barondes S.H."/>
        </authorList>
    </citation>
    <scope>CELL ATTACHMENT SITE</scope>
</reference>
<reference key="7">
    <citation type="journal article" date="2006" name="Mol. Cell. Proteomics">
        <title>Proteomics fingerprinting of phagosome maturation and evidence for the role of a Galpha during uptake.</title>
        <authorList>
            <person name="Gotthardt D."/>
            <person name="Blancheteau V."/>
            <person name="Bosserhoff A."/>
            <person name="Ruppert T."/>
            <person name="Delorenzi M."/>
            <person name="Soldati T."/>
        </authorList>
    </citation>
    <scope>IDENTIFICATION BY MASS SPECTROMETRY [LARGE SCALE ANALYSIS]</scope>
    <source>
        <strain>AX2</strain>
    </source>
</reference>
<feature type="initiator methionine" description="Removed" evidence="1">
    <location>
        <position position="1"/>
    </location>
</feature>
<feature type="chain" id="PRO_0000079915" description="Discoidin-1 subunit A">
    <location>
        <begin position="2"/>
        <end position="253"/>
    </location>
</feature>
<feature type="domain" description="F5/8 type C" evidence="2">
    <location>
        <begin position="2"/>
        <end position="152"/>
    </location>
</feature>
<feature type="short sequence motif" description="Cell attachment site">
    <location>
        <begin position="79"/>
        <end position="81"/>
    </location>
</feature>
<feature type="modified residue" description="N-acetylserine" evidence="1">
    <location>
        <position position="2"/>
    </location>
</feature>
<feature type="sequence conflict" description="In Ref. 1; AAA33197." evidence="3" ref="1">
    <original>V</original>
    <variation>L</variation>
    <location>
        <position position="98"/>
    </location>
</feature>
<feature type="sequence conflict" description="In Ref. 1; AAA33197." evidence="3" ref="1">
    <original>A</original>
    <variation>P</variation>
    <location>
        <position position="107"/>
    </location>
</feature>
<feature type="sequence conflict" description="In Ref. 1; AAA33197." evidence="3" ref="1">
    <original>R</original>
    <variation>P</variation>
    <location>
        <position position="130"/>
    </location>
</feature>
<feature type="strand" evidence="4">
    <location>
        <begin position="6"/>
        <end position="8"/>
    </location>
</feature>
<feature type="turn" evidence="4">
    <location>
        <begin position="9"/>
        <end position="13"/>
    </location>
</feature>
<feature type="strand" evidence="4">
    <location>
        <begin position="15"/>
        <end position="20"/>
    </location>
</feature>
<feature type="helix" evidence="4">
    <location>
        <begin position="29"/>
        <end position="31"/>
    </location>
</feature>
<feature type="helix" evidence="4">
    <location>
        <begin position="43"/>
        <end position="45"/>
    </location>
</feature>
<feature type="strand" evidence="4">
    <location>
        <begin position="48"/>
        <end position="51"/>
    </location>
</feature>
<feature type="strand" evidence="4">
    <location>
        <begin position="61"/>
        <end position="77"/>
    </location>
</feature>
<feature type="strand" evidence="4">
    <location>
        <begin position="80"/>
        <end position="83"/>
    </location>
</feature>
<feature type="strand" evidence="4">
    <location>
        <begin position="85"/>
        <end position="99"/>
    </location>
</feature>
<feature type="helix" evidence="4">
    <location>
        <begin position="103"/>
        <end position="106"/>
    </location>
</feature>
<feature type="strand" evidence="4">
    <location>
        <begin position="113"/>
        <end position="116"/>
    </location>
</feature>
<feature type="strand" evidence="4">
    <location>
        <begin position="119"/>
        <end position="142"/>
    </location>
</feature>
<feature type="strand" evidence="4">
    <location>
        <begin position="144"/>
        <end position="151"/>
    </location>
</feature>
<feature type="strand" evidence="4">
    <location>
        <begin position="157"/>
        <end position="166"/>
    </location>
</feature>
<feature type="helix" evidence="4">
    <location>
        <begin position="172"/>
        <end position="174"/>
    </location>
</feature>
<feature type="strand" evidence="4">
    <location>
        <begin position="177"/>
        <end position="187"/>
    </location>
</feature>
<feature type="strand" evidence="4">
    <location>
        <begin position="197"/>
        <end position="208"/>
    </location>
</feature>
<feature type="strand" evidence="4">
    <location>
        <begin position="213"/>
        <end position="222"/>
    </location>
</feature>
<feature type="strand" evidence="4">
    <location>
        <begin position="225"/>
        <end position="234"/>
    </location>
</feature>
<feature type="strand" evidence="4">
    <location>
        <begin position="239"/>
        <end position="252"/>
    </location>
</feature>
<proteinExistence type="evidence at protein level"/>
<keyword id="KW-0002">3D-structure</keyword>
<keyword id="KW-0007">Acetylation</keyword>
<keyword id="KW-0130">Cell adhesion</keyword>
<keyword id="KW-0963">Cytoplasm</keyword>
<keyword id="KW-0430">Lectin</keyword>
<keyword id="KW-1185">Reference proteome</keyword>